<reference key="1">
    <citation type="submission" date="2006-12" db="EMBL/GenBank/DDBJ databases">
        <title>Complete sequence of chromosome of Mycobacterium sp. KMS.</title>
        <authorList>
            <consortium name="US DOE Joint Genome Institute"/>
            <person name="Copeland A."/>
            <person name="Lucas S."/>
            <person name="Lapidus A."/>
            <person name="Barry K."/>
            <person name="Detter J.C."/>
            <person name="Glavina del Rio T."/>
            <person name="Hammon N."/>
            <person name="Israni S."/>
            <person name="Dalin E."/>
            <person name="Tice H."/>
            <person name="Pitluck S."/>
            <person name="Kiss H."/>
            <person name="Brettin T."/>
            <person name="Bruce D."/>
            <person name="Han C."/>
            <person name="Tapia R."/>
            <person name="Gilna P."/>
            <person name="Schmutz J."/>
            <person name="Larimer F."/>
            <person name="Land M."/>
            <person name="Hauser L."/>
            <person name="Kyrpides N."/>
            <person name="Mikhailova N."/>
            <person name="Miller C.D."/>
            <person name="Richardson P."/>
        </authorList>
    </citation>
    <scope>NUCLEOTIDE SEQUENCE [LARGE SCALE GENOMIC DNA]</scope>
    <source>
        <strain>KMS</strain>
    </source>
</reference>
<sequence length="57" mass="6562">MAVPKRRMSRSNTRSRRAQWKAKPTELVGVTVAGQQHKVPRRLLKAARLGLIDLDRR</sequence>
<evidence type="ECO:0000255" key="1">
    <source>
        <dbReference type="HAMAP-Rule" id="MF_00340"/>
    </source>
</evidence>
<evidence type="ECO:0000256" key="2">
    <source>
        <dbReference type="SAM" id="MobiDB-lite"/>
    </source>
</evidence>
<evidence type="ECO:0000305" key="3"/>
<feature type="chain" id="PRO_0000296507" description="Large ribosomal subunit protein bL32">
    <location>
        <begin position="1"/>
        <end position="57"/>
    </location>
</feature>
<feature type="region of interest" description="Disordered" evidence="2">
    <location>
        <begin position="1"/>
        <end position="22"/>
    </location>
</feature>
<feature type="compositionally biased region" description="Basic residues" evidence="2">
    <location>
        <begin position="1"/>
        <end position="20"/>
    </location>
</feature>
<gene>
    <name evidence="1" type="primary">rpmF</name>
    <name type="ordered locus">Mkms_4388</name>
</gene>
<organism>
    <name type="scientific">Mycobacterium sp. (strain KMS)</name>
    <dbReference type="NCBI Taxonomy" id="189918"/>
    <lineage>
        <taxon>Bacteria</taxon>
        <taxon>Bacillati</taxon>
        <taxon>Actinomycetota</taxon>
        <taxon>Actinomycetes</taxon>
        <taxon>Mycobacteriales</taxon>
        <taxon>Mycobacteriaceae</taxon>
        <taxon>Mycobacterium</taxon>
    </lineage>
</organism>
<name>RL32_MYCSK</name>
<accession>A1UL71</accession>
<comment type="similarity">
    <text evidence="1">Belongs to the bacterial ribosomal protein bL32 family.</text>
</comment>
<proteinExistence type="inferred from homology"/>
<keyword id="KW-0687">Ribonucleoprotein</keyword>
<keyword id="KW-0689">Ribosomal protein</keyword>
<dbReference type="EMBL" id="CP000518">
    <property type="protein sequence ID" value="ABL93579.1"/>
    <property type="molecule type" value="Genomic_DNA"/>
</dbReference>
<dbReference type="SMR" id="A1UL71"/>
<dbReference type="STRING" id="189918.Mkms_4388"/>
<dbReference type="KEGG" id="mkm:Mkms_4388"/>
<dbReference type="HOGENOM" id="CLU_203263_0_0_11"/>
<dbReference type="OrthoDB" id="9807363at2"/>
<dbReference type="GO" id="GO:0015934">
    <property type="term" value="C:large ribosomal subunit"/>
    <property type="evidence" value="ECO:0007669"/>
    <property type="project" value="InterPro"/>
</dbReference>
<dbReference type="GO" id="GO:0003735">
    <property type="term" value="F:structural constituent of ribosome"/>
    <property type="evidence" value="ECO:0007669"/>
    <property type="project" value="InterPro"/>
</dbReference>
<dbReference type="GO" id="GO:0006412">
    <property type="term" value="P:translation"/>
    <property type="evidence" value="ECO:0007669"/>
    <property type="project" value="UniProtKB-UniRule"/>
</dbReference>
<dbReference type="HAMAP" id="MF_00340">
    <property type="entry name" value="Ribosomal_bL32"/>
    <property type="match status" value="1"/>
</dbReference>
<dbReference type="InterPro" id="IPR002677">
    <property type="entry name" value="Ribosomal_bL32"/>
</dbReference>
<dbReference type="InterPro" id="IPR011332">
    <property type="entry name" value="Ribosomal_zn-bd"/>
</dbReference>
<dbReference type="NCBIfam" id="TIGR01031">
    <property type="entry name" value="rpmF_bact"/>
    <property type="match status" value="1"/>
</dbReference>
<dbReference type="Pfam" id="PF01783">
    <property type="entry name" value="Ribosomal_L32p"/>
    <property type="match status" value="1"/>
</dbReference>
<dbReference type="SUPFAM" id="SSF57829">
    <property type="entry name" value="Zn-binding ribosomal proteins"/>
    <property type="match status" value="1"/>
</dbReference>
<protein>
    <recommendedName>
        <fullName evidence="1">Large ribosomal subunit protein bL32</fullName>
    </recommendedName>
    <alternativeName>
        <fullName evidence="3">50S ribosomal protein L32</fullName>
    </alternativeName>
</protein>